<protein>
    <recommendedName>
        <fullName evidence="1">3-methyl-2-oxobutanoate hydroxymethyltransferase</fullName>
        <ecNumber evidence="1">2.1.2.11</ecNumber>
    </recommendedName>
    <alternativeName>
        <fullName evidence="1">Ketopantoate hydroxymethyltransferase</fullName>
        <shortName evidence="1">KPHMT</shortName>
    </alternativeName>
</protein>
<gene>
    <name evidence="1" type="primary">panB</name>
    <name type="ordered locus">USA300HOU_2593</name>
</gene>
<feature type="chain" id="PRO_1000076836" description="3-methyl-2-oxobutanoate hydroxymethyltransferase">
    <location>
        <begin position="1"/>
        <end position="272"/>
    </location>
</feature>
<feature type="active site" description="Proton acceptor" evidence="1">
    <location>
        <position position="179"/>
    </location>
</feature>
<feature type="binding site" evidence="1">
    <location>
        <begin position="43"/>
        <end position="44"/>
    </location>
    <ligand>
        <name>3-methyl-2-oxobutanoate</name>
        <dbReference type="ChEBI" id="CHEBI:11851"/>
    </ligand>
</feature>
<feature type="binding site" evidence="1">
    <location>
        <position position="43"/>
    </location>
    <ligand>
        <name>Mg(2+)</name>
        <dbReference type="ChEBI" id="CHEBI:18420"/>
    </ligand>
</feature>
<feature type="binding site" evidence="1">
    <location>
        <position position="82"/>
    </location>
    <ligand>
        <name>3-methyl-2-oxobutanoate</name>
        <dbReference type="ChEBI" id="CHEBI:11851"/>
    </ligand>
</feature>
<feature type="binding site" evidence="1">
    <location>
        <position position="82"/>
    </location>
    <ligand>
        <name>Mg(2+)</name>
        <dbReference type="ChEBI" id="CHEBI:18420"/>
    </ligand>
</feature>
<feature type="binding site" evidence="1">
    <location>
        <position position="112"/>
    </location>
    <ligand>
        <name>3-methyl-2-oxobutanoate</name>
        <dbReference type="ChEBI" id="CHEBI:11851"/>
    </ligand>
</feature>
<feature type="binding site" evidence="1">
    <location>
        <position position="114"/>
    </location>
    <ligand>
        <name>Mg(2+)</name>
        <dbReference type="ChEBI" id="CHEBI:18420"/>
    </ligand>
</feature>
<sequence length="272" mass="29256">MKTVSQLIDMKQKQTKISMVTAYDFPSAKQVEAAGIDMILVGDSLGMTVLGYESTVQVTLADMIHHGRAVRRGAPNTFVVVDMPIGAVGISMTQDLNHALKLYQETNANAIKAEGAHITPFIEKATAIGIPVVAHLGLTPQSVGVMGYKLQGATKEAAEQLILDAKNVEQAGAVALVLEAIPNDLAEEISKHLTIPVIGIGAGKGTDGQVLVYHDMLNYGVEHKAKFVKQFADFSVGVDGLKQYDQEVKSGAFPSEEYTYKKKIMNEVNNND</sequence>
<organism>
    <name type="scientific">Staphylococcus aureus (strain USA300 / TCH1516)</name>
    <dbReference type="NCBI Taxonomy" id="451516"/>
    <lineage>
        <taxon>Bacteria</taxon>
        <taxon>Bacillati</taxon>
        <taxon>Bacillota</taxon>
        <taxon>Bacilli</taxon>
        <taxon>Bacillales</taxon>
        <taxon>Staphylococcaceae</taxon>
        <taxon>Staphylococcus</taxon>
    </lineage>
</organism>
<proteinExistence type="inferred from homology"/>
<name>PANB_STAAT</name>
<comment type="function">
    <text evidence="1">Catalyzes the reversible reaction in which hydroxymethyl group from 5,10-methylenetetrahydrofolate is transferred onto alpha-ketoisovalerate to form ketopantoate.</text>
</comment>
<comment type="catalytic activity">
    <reaction evidence="1">
        <text>3-methyl-2-oxobutanoate + (6R)-5,10-methylene-5,6,7,8-tetrahydrofolate + H2O = 2-dehydropantoate + (6S)-5,6,7,8-tetrahydrofolate</text>
        <dbReference type="Rhea" id="RHEA:11824"/>
        <dbReference type="ChEBI" id="CHEBI:11561"/>
        <dbReference type="ChEBI" id="CHEBI:11851"/>
        <dbReference type="ChEBI" id="CHEBI:15377"/>
        <dbReference type="ChEBI" id="CHEBI:15636"/>
        <dbReference type="ChEBI" id="CHEBI:57453"/>
        <dbReference type="EC" id="2.1.2.11"/>
    </reaction>
</comment>
<comment type="cofactor">
    <cofactor evidence="1">
        <name>Mg(2+)</name>
        <dbReference type="ChEBI" id="CHEBI:18420"/>
    </cofactor>
    <text evidence="1">Binds 1 Mg(2+) ion per subunit.</text>
</comment>
<comment type="pathway">
    <text evidence="1">Cofactor biosynthesis; (R)-pantothenate biosynthesis; (R)-pantoate from 3-methyl-2-oxobutanoate: step 1/2.</text>
</comment>
<comment type="subunit">
    <text evidence="1">Homodecamer; pentamer of dimers.</text>
</comment>
<comment type="subcellular location">
    <subcellularLocation>
        <location evidence="1">Cytoplasm</location>
    </subcellularLocation>
</comment>
<comment type="similarity">
    <text evidence="1">Belongs to the PanB family.</text>
</comment>
<evidence type="ECO:0000255" key="1">
    <source>
        <dbReference type="HAMAP-Rule" id="MF_00156"/>
    </source>
</evidence>
<keyword id="KW-0963">Cytoplasm</keyword>
<keyword id="KW-0460">Magnesium</keyword>
<keyword id="KW-0479">Metal-binding</keyword>
<keyword id="KW-0566">Pantothenate biosynthesis</keyword>
<keyword id="KW-0808">Transferase</keyword>
<accession>A8Z3J9</accession>
<reference key="1">
    <citation type="journal article" date="2007" name="BMC Microbiol.">
        <title>Subtle genetic changes enhance virulence of methicillin resistant and sensitive Staphylococcus aureus.</title>
        <authorList>
            <person name="Highlander S.K."/>
            <person name="Hulten K.G."/>
            <person name="Qin X."/>
            <person name="Jiang H."/>
            <person name="Yerrapragada S."/>
            <person name="Mason E.O. Jr."/>
            <person name="Shang Y."/>
            <person name="Williams T.M."/>
            <person name="Fortunov R.M."/>
            <person name="Liu Y."/>
            <person name="Igboeli O."/>
            <person name="Petrosino J."/>
            <person name="Tirumalai M."/>
            <person name="Uzman A."/>
            <person name="Fox G.E."/>
            <person name="Cardenas A.M."/>
            <person name="Muzny D.M."/>
            <person name="Hemphill L."/>
            <person name="Ding Y."/>
            <person name="Dugan S."/>
            <person name="Blyth P.R."/>
            <person name="Buhay C.J."/>
            <person name="Dinh H.H."/>
            <person name="Hawes A.C."/>
            <person name="Holder M."/>
            <person name="Kovar C.L."/>
            <person name="Lee S.L."/>
            <person name="Liu W."/>
            <person name="Nazareth L.V."/>
            <person name="Wang Q."/>
            <person name="Zhou J."/>
            <person name="Kaplan S.L."/>
            <person name="Weinstock G.M."/>
        </authorList>
    </citation>
    <scope>NUCLEOTIDE SEQUENCE [LARGE SCALE GENOMIC DNA]</scope>
    <source>
        <strain>USA300 / TCH1516</strain>
    </source>
</reference>
<dbReference type="EC" id="2.1.2.11" evidence="1"/>
<dbReference type="EMBL" id="CP000730">
    <property type="protein sequence ID" value="ABX30579.1"/>
    <property type="molecule type" value="Genomic_DNA"/>
</dbReference>
<dbReference type="RefSeq" id="WP_000860047.1">
    <property type="nucleotide sequence ID" value="NC_010079.1"/>
</dbReference>
<dbReference type="SMR" id="A8Z3J9"/>
<dbReference type="KEGG" id="sax:USA300HOU_2593"/>
<dbReference type="HOGENOM" id="CLU_036645_1_0_9"/>
<dbReference type="UniPathway" id="UPA00028">
    <property type="reaction ID" value="UER00003"/>
</dbReference>
<dbReference type="GO" id="GO:0005737">
    <property type="term" value="C:cytoplasm"/>
    <property type="evidence" value="ECO:0007669"/>
    <property type="project" value="UniProtKB-SubCell"/>
</dbReference>
<dbReference type="GO" id="GO:0003864">
    <property type="term" value="F:3-methyl-2-oxobutanoate hydroxymethyltransferase activity"/>
    <property type="evidence" value="ECO:0007669"/>
    <property type="project" value="UniProtKB-UniRule"/>
</dbReference>
<dbReference type="GO" id="GO:0000287">
    <property type="term" value="F:magnesium ion binding"/>
    <property type="evidence" value="ECO:0007669"/>
    <property type="project" value="TreeGrafter"/>
</dbReference>
<dbReference type="GO" id="GO:0015940">
    <property type="term" value="P:pantothenate biosynthetic process"/>
    <property type="evidence" value="ECO:0007669"/>
    <property type="project" value="UniProtKB-UniRule"/>
</dbReference>
<dbReference type="CDD" id="cd06557">
    <property type="entry name" value="KPHMT-like"/>
    <property type="match status" value="1"/>
</dbReference>
<dbReference type="FunFam" id="3.20.20.60:FF:000030">
    <property type="entry name" value="3-methyl-2-oxobutanoate hydroxymethyltransferase"/>
    <property type="match status" value="1"/>
</dbReference>
<dbReference type="Gene3D" id="3.20.20.60">
    <property type="entry name" value="Phosphoenolpyruvate-binding domains"/>
    <property type="match status" value="1"/>
</dbReference>
<dbReference type="HAMAP" id="MF_00156">
    <property type="entry name" value="PanB"/>
    <property type="match status" value="1"/>
</dbReference>
<dbReference type="InterPro" id="IPR003700">
    <property type="entry name" value="Pantoate_hydroxy_MeTrfase"/>
</dbReference>
<dbReference type="InterPro" id="IPR015813">
    <property type="entry name" value="Pyrv/PenolPyrv_kinase-like_dom"/>
</dbReference>
<dbReference type="InterPro" id="IPR040442">
    <property type="entry name" value="Pyrv_kinase-like_dom_sf"/>
</dbReference>
<dbReference type="NCBIfam" id="TIGR00222">
    <property type="entry name" value="panB"/>
    <property type="match status" value="1"/>
</dbReference>
<dbReference type="NCBIfam" id="NF001452">
    <property type="entry name" value="PRK00311.1"/>
    <property type="match status" value="1"/>
</dbReference>
<dbReference type="PANTHER" id="PTHR20881">
    <property type="entry name" value="3-METHYL-2-OXOBUTANOATE HYDROXYMETHYLTRANSFERASE"/>
    <property type="match status" value="1"/>
</dbReference>
<dbReference type="PANTHER" id="PTHR20881:SF0">
    <property type="entry name" value="3-METHYL-2-OXOBUTANOATE HYDROXYMETHYLTRANSFERASE"/>
    <property type="match status" value="1"/>
</dbReference>
<dbReference type="Pfam" id="PF02548">
    <property type="entry name" value="Pantoate_transf"/>
    <property type="match status" value="1"/>
</dbReference>
<dbReference type="PIRSF" id="PIRSF000388">
    <property type="entry name" value="Pantoate_hydroxy_MeTrfase"/>
    <property type="match status" value="1"/>
</dbReference>
<dbReference type="SUPFAM" id="SSF51621">
    <property type="entry name" value="Phosphoenolpyruvate/pyruvate domain"/>
    <property type="match status" value="1"/>
</dbReference>